<sequence length="407" mass="44186">MKRAFIMVLDSFGIGATADADRFGDVGSDTLGHIAEACAKGEADNGRKGPLNLPNLTRLGLVKAHEGSTGKIAAGMDGNADVIGAYAWAHELSSGKDTPSGHWEIAGVPVLFDWGYFSDHENSFPQELLDKLVKRANLPGYLGNCHSSGTVILDQLGEEHMKTGKPIFYTSADSVFQIACHEETFGLDKLYELCEIAREELTEGGYNIGRVIARPFIGDKAGNFQRTGNRHDLAVEPPAPTVLQKLVDEKQGHVVSVGKIADIYANCGITKKVKATGLDALFDATLKEMKEAGDKTIVFTNFVDFDSSWGHRRDIAGYAAGLELFDRRLPELMELVGEDDILILTADHGCDPSWTGTDHTREHIPVLIYGPKVKPGSLGHRETFADIGQTLATYFGTSPMDYGKNML</sequence>
<dbReference type="EC" id="5.4.2.7" evidence="1"/>
<dbReference type="EMBL" id="AM933173">
    <property type="protein sequence ID" value="CAR40157.1"/>
    <property type="molecule type" value="Genomic_DNA"/>
</dbReference>
<dbReference type="RefSeq" id="WP_000816448.1">
    <property type="nucleotide sequence ID" value="NC_011274.1"/>
</dbReference>
<dbReference type="SMR" id="B5R9V1"/>
<dbReference type="KEGG" id="seg:SG4395"/>
<dbReference type="HOGENOM" id="CLU_053861_0_0_6"/>
<dbReference type="UniPathway" id="UPA00002">
    <property type="reaction ID" value="UER00467"/>
</dbReference>
<dbReference type="Proteomes" id="UP000008321">
    <property type="component" value="Chromosome"/>
</dbReference>
<dbReference type="GO" id="GO:0005829">
    <property type="term" value="C:cytosol"/>
    <property type="evidence" value="ECO:0007669"/>
    <property type="project" value="TreeGrafter"/>
</dbReference>
<dbReference type="GO" id="GO:0000287">
    <property type="term" value="F:magnesium ion binding"/>
    <property type="evidence" value="ECO:0007669"/>
    <property type="project" value="InterPro"/>
</dbReference>
<dbReference type="GO" id="GO:0030145">
    <property type="term" value="F:manganese ion binding"/>
    <property type="evidence" value="ECO:0007669"/>
    <property type="project" value="UniProtKB-UniRule"/>
</dbReference>
<dbReference type="GO" id="GO:0008973">
    <property type="term" value="F:phosphopentomutase activity"/>
    <property type="evidence" value="ECO:0007669"/>
    <property type="project" value="UniProtKB-UniRule"/>
</dbReference>
<dbReference type="GO" id="GO:0006018">
    <property type="term" value="P:2-deoxyribose 1-phosphate catabolic process"/>
    <property type="evidence" value="ECO:0007669"/>
    <property type="project" value="UniProtKB-UniRule"/>
</dbReference>
<dbReference type="GO" id="GO:0006015">
    <property type="term" value="P:5-phosphoribose 1-diphosphate biosynthetic process"/>
    <property type="evidence" value="ECO:0007669"/>
    <property type="project" value="UniProtKB-UniPathway"/>
</dbReference>
<dbReference type="GO" id="GO:0043094">
    <property type="term" value="P:metabolic compound salvage"/>
    <property type="evidence" value="ECO:0007669"/>
    <property type="project" value="InterPro"/>
</dbReference>
<dbReference type="GO" id="GO:0009117">
    <property type="term" value="P:nucleotide metabolic process"/>
    <property type="evidence" value="ECO:0007669"/>
    <property type="project" value="InterPro"/>
</dbReference>
<dbReference type="CDD" id="cd16009">
    <property type="entry name" value="PPM"/>
    <property type="match status" value="1"/>
</dbReference>
<dbReference type="FunFam" id="3.30.70.1250:FF:000001">
    <property type="entry name" value="Phosphopentomutase"/>
    <property type="match status" value="1"/>
</dbReference>
<dbReference type="Gene3D" id="3.40.720.10">
    <property type="entry name" value="Alkaline Phosphatase, subunit A"/>
    <property type="match status" value="1"/>
</dbReference>
<dbReference type="Gene3D" id="3.30.70.1250">
    <property type="entry name" value="Phosphopentomutase"/>
    <property type="match status" value="1"/>
</dbReference>
<dbReference type="HAMAP" id="MF_00740">
    <property type="entry name" value="Phosphopentomut"/>
    <property type="match status" value="1"/>
</dbReference>
<dbReference type="InterPro" id="IPR017850">
    <property type="entry name" value="Alkaline_phosphatase_core_sf"/>
</dbReference>
<dbReference type="InterPro" id="IPR010045">
    <property type="entry name" value="DeoB"/>
</dbReference>
<dbReference type="InterPro" id="IPR006124">
    <property type="entry name" value="Metalloenzyme"/>
</dbReference>
<dbReference type="InterPro" id="IPR024052">
    <property type="entry name" value="Phosphopentomutase_DeoB_cap_sf"/>
</dbReference>
<dbReference type="NCBIfam" id="TIGR01696">
    <property type="entry name" value="deoB"/>
    <property type="match status" value="1"/>
</dbReference>
<dbReference type="NCBIfam" id="NF003766">
    <property type="entry name" value="PRK05362.1"/>
    <property type="match status" value="1"/>
</dbReference>
<dbReference type="PANTHER" id="PTHR21110">
    <property type="entry name" value="PHOSPHOPENTOMUTASE"/>
    <property type="match status" value="1"/>
</dbReference>
<dbReference type="PANTHER" id="PTHR21110:SF0">
    <property type="entry name" value="PHOSPHOPENTOMUTASE"/>
    <property type="match status" value="1"/>
</dbReference>
<dbReference type="Pfam" id="PF01676">
    <property type="entry name" value="Metalloenzyme"/>
    <property type="match status" value="1"/>
</dbReference>
<dbReference type="PIRSF" id="PIRSF001491">
    <property type="entry name" value="Ppentomutase"/>
    <property type="match status" value="1"/>
</dbReference>
<dbReference type="SUPFAM" id="SSF53649">
    <property type="entry name" value="Alkaline phosphatase-like"/>
    <property type="match status" value="1"/>
</dbReference>
<dbReference type="SUPFAM" id="SSF143856">
    <property type="entry name" value="DeoB insert domain-like"/>
    <property type="match status" value="1"/>
</dbReference>
<reference key="1">
    <citation type="journal article" date="2008" name="Genome Res.">
        <title>Comparative genome analysis of Salmonella enteritidis PT4 and Salmonella gallinarum 287/91 provides insights into evolutionary and host adaptation pathways.</title>
        <authorList>
            <person name="Thomson N.R."/>
            <person name="Clayton D.J."/>
            <person name="Windhorst D."/>
            <person name="Vernikos G."/>
            <person name="Davidson S."/>
            <person name="Churcher C."/>
            <person name="Quail M.A."/>
            <person name="Stevens M."/>
            <person name="Jones M.A."/>
            <person name="Watson M."/>
            <person name="Barron A."/>
            <person name="Layton A."/>
            <person name="Pickard D."/>
            <person name="Kingsley R.A."/>
            <person name="Bignell A."/>
            <person name="Clark L."/>
            <person name="Harris B."/>
            <person name="Ormond D."/>
            <person name="Abdellah Z."/>
            <person name="Brooks K."/>
            <person name="Cherevach I."/>
            <person name="Chillingworth T."/>
            <person name="Woodward J."/>
            <person name="Norberczak H."/>
            <person name="Lord A."/>
            <person name="Arrowsmith C."/>
            <person name="Jagels K."/>
            <person name="Moule S."/>
            <person name="Mungall K."/>
            <person name="Saunders M."/>
            <person name="Whitehead S."/>
            <person name="Chabalgoity J.A."/>
            <person name="Maskell D."/>
            <person name="Humphreys T."/>
            <person name="Roberts M."/>
            <person name="Barrow P.A."/>
            <person name="Dougan G."/>
            <person name="Parkhill J."/>
        </authorList>
    </citation>
    <scope>NUCLEOTIDE SEQUENCE [LARGE SCALE GENOMIC DNA]</scope>
    <source>
        <strain>287/91 / NCTC 13346</strain>
    </source>
</reference>
<gene>
    <name evidence="1" type="primary">deoB</name>
    <name type="ordered locus">SG4395</name>
</gene>
<comment type="function">
    <text evidence="1">Isomerase that catalyzes the conversion of deoxy-ribose 1-phosphate (dRib-1-P) and ribose 1-phosphate (Rib-1-P) to deoxy-ribose 5-phosphate (dRib-5-P) and ribose 5-phosphate (Rib-5-P), respectively.</text>
</comment>
<comment type="catalytic activity">
    <reaction evidence="1">
        <text>2-deoxy-alpha-D-ribose 1-phosphate = 2-deoxy-D-ribose 5-phosphate</text>
        <dbReference type="Rhea" id="RHEA:27658"/>
        <dbReference type="ChEBI" id="CHEBI:57259"/>
        <dbReference type="ChEBI" id="CHEBI:62877"/>
        <dbReference type="EC" id="5.4.2.7"/>
    </reaction>
</comment>
<comment type="catalytic activity">
    <reaction evidence="1">
        <text>alpha-D-ribose 1-phosphate = D-ribose 5-phosphate</text>
        <dbReference type="Rhea" id="RHEA:18793"/>
        <dbReference type="ChEBI" id="CHEBI:57720"/>
        <dbReference type="ChEBI" id="CHEBI:78346"/>
        <dbReference type="EC" id="5.4.2.7"/>
    </reaction>
</comment>
<comment type="cofactor">
    <cofactor evidence="1">
        <name>Mn(2+)</name>
        <dbReference type="ChEBI" id="CHEBI:29035"/>
    </cofactor>
    <text evidence="1">Binds 2 manganese ions.</text>
</comment>
<comment type="pathway">
    <text evidence="1">Carbohydrate degradation; 2-deoxy-D-ribose 1-phosphate degradation; D-glyceraldehyde 3-phosphate and acetaldehyde from 2-deoxy-alpha-D-ribose 1-phosphate: step 1/2.</text>
</comment>
<comment type="subcellular location">
    <subcellularLocation>
        <location evidence="1">Cytoplasm</location>
    </subcellularLocation>
</comment>
<comment type="similarity">
    <text evidence="1">Belongs to the phosphopentomutase family.</text>
</comment>
<protein>
    <recommendedName>
        <fullName evidence="1">Phosphopentomutase</fullName>
        <ecNumber evidence="1">5.4.2.7</ecNumber>
    </recommendedName>
    <alternativeName>
        <fullName evidence="1">Phosphodeoxyribomutase</fullName>
    </alternativeName>
</protein>
<name>DEOB_SALG2</name>
<feature type="chain" id="PRO_1000133095" description="Phosphopentomutase">
    <location>
        <begin position="1"/>
        <end position="407"/>
    </location>
</feature>
<feature type="binding site" evidence="1">
    <location>
        <position position="10"/>
    </location>
    <ligand>
        <name>Mn(2+)</name>
        <dbReference type="ChEBI" id="CHEBI:29035"/>
        <label>1</label>
    </ligand>
</feature>
<feature type="binding site" evidence="1">
    <location>
        <position position="306"/>
    </location>
    <ligand>
        <name>Mn(2+)</name>
        <dbReference type="ChEBI" id="CHEBI:29035"/>
        <label>2</label>
    </ligand>
</feature>
<feature type="binding site" evidence="1">
    <location>
        <position position="311"/>
    </location>
    <ligand>
        <name>Mn(2+)</name>
        <dbReference type="ChEBI" id="CHEBI:29035"/>
        <label>2</label>
    </ligand>
</feature>
<feature type="binding site" evidence="1">
    <location>
        <position position="347"/>
    </location>
    <ligand>
        <name>Mn(2+)</name>
        <dbReference type="ChEBI" id="CHEBI:29035"/>
        <label>1</label>
    </ligand>
</feature>
<feature type="binding site" evidence="1">
    <location>
        <position position="348"/>
    </location>
    <ligand>
        <name>Mn(2+)</name>
        <dbReference type="ChEBI" id="CHEBI:29035"/>
        <label>1</label>
    </ligand>
</feature>
<feature type="binding site" evidence="1">
    <location>
        <position position="359"/>
    </location>
    <ligand>
        <name>Mn(2+)</name>
        <dbReference type="ChEBI" id="CHEBI:29035"/>
        <label>2</label>
    </ligand>
</feature>
<accession>B5R9V1</accession>
<keyword id="KW-0963">Cytoplasm</keyword>
<keyword id="KW-0413">Isomerase</keyword>
<keyword id="KW-0464">Manganese</keyword>
<keyword id="KW-0479">Metal-binding</keyword>
<organism>
    <name type="scientific">Salmonella gallinarum (strain 287/91 / NCTC 13346)</name>
    <dbReference type="NCBI Taxonomy" id="550538"/>
    <lineage>
        <taxon>Bacteria</taxon>
        <taxon>Pseudomonadati</taxon>
        <taxon>Pseudomonadota</taxon>
        <taxon>Gammaproteobacteria</taxon>
        <taxon>Enterobacterales</taxon>
        <taxon>Enterobacteriaceae</taxon>
        <taxon>Salmonella</taxon>
    </lineage>
</organism>
<proteinExistence type="inferred from homology"/>
<evidence type="ECO:0000255" key="1">
    <source>
        <dbReference type="HAMAP-Rule" id="MF_00740"/>
    </source>
</evidence>